<proteinExistence type="inferred from homology"/>
<name>RECR_SACD2</name>
<sequence>MFSPLIDQLINSLRHLPGVGPKSAQRMALHLLERDREGAQNLSEVLAKAVEHVHRCQQCRTLTEQALCNICSNARRNRKELCIVETPADVIAIETSAVFSGYYFVLLGRLSPIDGIGPKEIGMDVLASRFAEGEIEEVIIATNPTIEGEATAHYISERAKAQGIKVSRIAHGIPIGGELEYVDGGTLAHAISRRQEI</sequence>
<comment type="function">
    <text evidence="1">May play a role in DNA repair. It seems to be involved in an RecBC-independent recombinational process of DNA repair. It may act with RecF and RecO.</text>
</comment>
<comment type="similarity">
    <text evidence="1">Belongs to the RecR family.</text>
</comment>
<organism>
    <name type="scientific">Saccharophagus degradans (strain 2-40 / ATCC 43961 / DSM 17024)</name>
    <dbReference type="NCBI Taxonomy" id="203122"/>
    <lineage>
        <taxon>Bacteria</taxon>
        <taxon>Pseudomonadati</taxon>
        <taxon>Pseudomonadota</taxon>
        <taxon>Gammaproteobacteria</taxon>
        <taxon>Cellvibrionales</taxon>
        <taxon>Cellvibrionaceae</taxon>
        <taxon>Saccharophagus</taxon>
    </lineage>
</organism>
<gene>
    <name evidence="1" type="primary">recR</name>
    <name type="ordered locus">Sde_1337</name>
</gene>
<accession>Q21L30</accession>
<keyword id="KW-0227">DNA damage</keyword>
<keyword id="KW-0233">DNA recombination</keyword>
<keyword id="KW-0234">DNA repair</keyword>
<keyword id="KW-0479">Metal-binding</keyword>
<keyword id="KW-1185">Reference proteome</keyword>
<keyword id="KW-0862">Zinc</keyword>
<keyword id="KW-0863">Zinc-finger</keyword>
<reference key="1">
    <citation type="journal article" date="2008" name="PLoS Genet.">
        <title>Complete genome sequence of the complex carbohydrate-degrading marine bacterium, Saccharophagus degradans strain 2-40 T.</title>
        <authorList>
            <person name="Weiner R.M."/>
            <person name="Taylor L.E. II"/>
            <person name="Henrissat B."/>
            <person name="Hauser L."/>
            <person name="Land M."/>
            <person name="Coutinho P.M."/>
            <person name="Rancurel C."/>
            <person name="Saunders E.H."/>
            <person name="Longmire A.G."/>
            <person name="Zhang H."/>
            <person name="Bayer E.A."/>
            <person name="Gilbert H.J."/>
            <person name="Larimer F."/>
            <person name="Zhulin I.B."/>
            <person name="Ekborg N.A."/>
            <person name="Lamed R."/>
            <person name="Richardson P.M."/>
            <person name="Borovok I."/>
            <person name="Hutcheson S."/>
        </authorList>
    </citation>
    <scope>NUCLEOTIDE SEQUENCE [LARGE SCALE GENOMIC DNA]</scope>
    <source>
        <strain>2-40 / ATCC 43961 / DSM 17024</strain>
    </source>
</reference>
<feature type="chain" id="PRO_0000322950" description="Recombination protein RecR">
    <location>
        <begin position="1"/>
        <end position="197"/>
    </location>
</feature>
<feature type="domain" description="Toprim" evidence="1">
    <location>
        <begin position="79"/>
        <end position="174"/>
    </location>
</feature>
<feature type="zinc finger region" description="C4-type" evidence="1">
    <location>
        <begin position="56"/>
        <end position="71"/>
    </location>
</feature>
<dbReference type="EMBL" id="CP000282">
    <property type="protein sequence ID" value="ABD80599.1"/>
    <property type="molecule type" value="Genomic_DNA"/>
</dbReference>
<dbReference type="RefSeq" id="WP_011467819.1">
    <property type="nucleotide sequence ID" value="NC_007912.1"/>
</dbReference>
<dbReference type="SMR" id="Q21L30"/>
<dbReference type="STRING" id="203122.Sde_1337"/>
<dbReference type="GeneID" id="98613012"/>
<dbReference type="KEGG" id="sde:Sde_1337"/>
<dbReference type="eggNOG" id="COG0353">
    <property type="taxonomic scope" value="Bacteria"/>
</dbReference>
<dbReference type="HOGENOM" id="CLU_060739_1_2_6"/>
<dbReference type="OrthoDB" id="9802672at2"/>
<dbReference type="Proteomes" id="UP000001947">
    <property type="component" value="Chromosome"/>
</dbReference>
<dbReference type="GO" id="GO:0003677">
    <property type="term" value="F:DNA binding"/>
    <property type="evidence" value="ECO:0007669"/>
    <property type="project" value="UniProtKB-UniRule"/>
</dbReference>
<dbReference type="GO" id="GO:0008270">
    <property type="term" value="F:zinc ion binding"/>
    <property type="evidence" value="ECO:0007669"/>
    <property type="project" value="UniProtKB-KW"/>
</dbReference>
<dbReference type="GO" id="GO:0006310">
    <property type="term" value="P:DNA recombination"/>
    <property type="evidence" value="ECO:0007669"/>
    <property type="project" value="UniProtKB-UniRule"/>
</dbReference>
<dbReference type="GO" id="GO:0006281">
    <property type="term" value="P:DNA repair"/>
    <property type="evidence" value="ECO:0007669"/>
    <property type="project" value="UniProtKB-UniRule"/>
</dbReference>
<dbReference type="CDD" id="cd01025">
    <property type="entry name" value="TOPRIM_recR"/>
    <property type="match status" value="1"/>
</dbReference>
<dbReference type="Gene3D" id="3.40.1360.10">
    <property type="match status" value="1"/>
</dbReference>
<dbReference type="Gene3D" id="6.10.250.240">
    <property type="match status" value="1"/>
</dbReference>
<dbReference type="Gene3D" id="1.10.8.420">
    <property type="entry name" value="RecR Domain 1"/>
    <property type="match status" value="1"/>
</dbReference>
<dbReference type="HAMAP" id="MF_00017">
    <property type="entry name" value="RecR"/>
    <property type="match status" value="1"/>
</dbReference>
<dbReference type="InterPro" id="IPR000093">
    <property type="entry name" value="DNA_Rcmb_RecR"/>
</dbReference>
<dbReference type="InterPro" id="IPR023627">
    <property type="entry name" value="Rcmb_RecR"/>
</dbReference>
<dbReference type="InterPro" id="IPR015967">
    <property type="entry name" value="Rcmb_RecR_Znf"/>
</dbReference>
<dbReference type="InterPro" id="IPR006171">
    <property type="entry name" value="TOPRIM_dom"/>
</dbReference>
<dbReference type="InterPro" id="IPR034137">
    <property type="entry name" value="TOPRIM_RecR"/>
</dbReference>
<dbReference type="NCBIfam" id="TIGR00615">
    <property type="entry name" value="recR"/>
    <property type="match status" value="1"/>
</dbReference>
<dbReference type="PANTHER" id="PTHR30446">
    <property type="entry name" value="RECOMBINATION PROTEIN RECR"/>
    <property type="match status" value="1"/>
</dbReference>
<dbReference type="PANTHER" id="PTHR30446:SF0">
    <property type="entry name" value="RECOMBINATION PROTEIN RECR"/>
    <property type="match status" value="1"/>
</dbReference>
<dbReference type="Pfam" id="PF21175">
    <property type="entry name" value="RecR_C"/>
    <property type="match status" value="1"/>
</dbReference>
<dbReference type="Pfam" id="PF21176">
    <property type="entry name" value="RecR_HhH"/>
    <property type="match status" value="1"/>
</dbReference>
<dbReference type="Pfam" id="PF02132">
    <property type="entry name" value="RecR_ZnF"/>
    <property type="match status" value="1"/>
</dbReference>
<dbReference type="Pfam" id="PF13662">
    <property type="entry name" value="Toprim_4"/>
    <property type="match status" value="1"/>
</dbReference>
<dbReference type="SMART" id="SM00493">
    <property type="entry name" value="TOPRIM"/>
    <property type="match status" value="1"/>
</dbReference>
<dbReference type="SUPFAM" id="SSF111304">
    <property type="entry name" value="Recombination protein RecR"/>
    <property type="match status" value="1"/>
</dbReference>
<dbReference type="PROSITE" id="PS01300">
    <property type="entry name" value="RECR"/>
    <property type="match status" value="1"/>
</dbReference>
<dbReference type="PROSITE" id="PS50880">
    <property type="entry name" value="TOPRIM"/>
    <property type="match status" value="1"/>
</dbReference>
<evidence type="ECO:0000255" key="1">
    <source>
        <dbReference type="HAMAP-Rule" id="MF_00017"/>
    </source>
</evidence>
<protein>
    <recommendedName>
        <fullName evidence="1">Recombination protein RecR</fullName>
    </recommendedName>
</protein>